<comment type="function">
    <text evidence="9 11">Non-reducing polyketide synthase; part of the gene cluster that mediates the biosynthesis of aurasperone B, a dimeric gamma-naphthopyrone (PubMed:31067027). The first step in the biosynthesis of aurasperone B is the production of gamma-naphthopyrone precursor YWA1 by the non-reducing polyketide synthase albA, via condensation of one acetyl-CoA starter unit with 6 malonyl-CoA units (PubMed:31067027). YWA1 is then methylated by aunE at position C-6 to yield foncesin which is further methylated at position C-8 by aunD to produce fonsecin B (Probable). A key enzyme in the biosynthetic pathway is the cytochrome P450 monooxygenase aunB which catalyzes the oxidative dimerization of fonsecin B to aurasperone B (PubMed:31067027). AunB also catalyzes the oxidative dimerization of rubrofusarin B into aurasperone A (PubMed:31067027).</text>
</comment>
<comment type="catalytic activity">
    <reaction evidence="11">
        <text>6 malonyl-CoA + acetyl-CoA + 6 H(+) = naphtopyrone YWA1 + 6 CO2 + 7 CoA + H2O</text>
        <dbReference type="Rhea" id="RHEA:62652"/>
        <dbReference type="ChEBI" id="CHEBI:15377"/>
        <dbReference type="ChEBI" id="CHEBI:15378"/>
        <dbReference type="ChEBI" id="CHEBI:16526"/>
        <dbReference type="ChEBI" id="CHEBI:57287"/>
        <dbReference type="ChEBI" id="CHEBI:57288"/>
        <dbReference type="ChEBI" id="CHEBI:57384"/>
        <dbReference type="ChEBI" id="CHEBI:133763"/>
    </reaction>
    <physiologicalReaction direction="left-to-right" evidence="11">
        <dbReference type="Rhea" id="RHEA:62653"/>
    </physiologicalReaction>
</comment>
<comment type="pathway">
    <text evidence="11">Secondary metabolite biosynthesis.</text>
</comment>
<comment type="domain">
    <text evidence="2">Multidomain protein; including a starter unit:ACP transacylase (SAT) that selects the starter unit; a ketosynthase (KS) that catalyzes repeated decarboxylative condensation to elongate the polyketide backbone; a malonyl-CoA:ACP transacylase (MAT) that selects and transfers the extender unit malonyl-CoA; a product template (PT) domain that controls the immediate cyclization regioselectivity of the reactive polyketide backbone; and 2 acyl-carrier protein (ACP) domains that serve as the tethers of the growing and completed polyketide via their phosphopantetheinyl arm.</text>
</comment>
<comment type="domain">
    <text evidence="1">The C-terminal region is involved in Claisen-type cyclization of the second ring of naphthopyrone.</text>
</comment>
<dbReference type="EC" id="2.3.1.-" evidence="11"/>
<dbReference type="EMBL" id="AM270206">
    <property type="protein sequence ID" value="CAL00851.1"/>
    <property type="molecule type" value="Genomic_DNA"/>
</dbReference>
<dbReference type="SMR" id="A2QUI2"/>
<dbReference type="ESTHER" id="aspna-alba">
    <property type="family name" value="Thioesterase"/>
</dbReference>
<dbReference type="EnsemblFungi" id="CAL00851">
    <property type="protein sequence ID" value="CAL00851"/>
    <property type="gene ID" value="An09g05730"/>
</dbReference>
<dbReference type="VEuPathDB" id="FungiDB:An09g05730"/>
<dbReference type="HOGENOM" id="CLU_000022_6_0_1"/>
<dbReference type="Proteomes" id="UP000006706">
    <property type="component" value="Chromosome 1L"/>
</dbReference>
<dbReference type="GO" id="GO:0004315">
    <property type="term" value="F:3-oxoacyl-[acyl-carrier-protein] synthase activity"/>
    <property type="evidence" value="ECO:0007669"/>
    <property type="project" value="InterPro"/>
</dbReference>
<dbReference type="GO" id="GO:0004312">
    <property type="term" value="F:fatty acid synthase activity"/>
    <property type="evidence" value="ECO:0007669"/>
    <property type="project" value="TreeGrafter"/>
</dbReference>
<dbReference type="GO" id="GO:0031177">
    <property type="term" value="F:phosphopantetheine binding"/>
    <property type="evidence" value="ECO:0007669"/>
    <property type="project" value="InterPro"/>
</dbReference>
<dbReference type="GO" id="GO:0006633">
    <property type="term" value="P:fatty acid biosynthetic process"/>
    <property type="evidence" value="ECO:0007669"/>
    <property type="project" value="InterPro"/>
</dbReference>
<dbReference type="GO" id="GO:0042438">
    <property type="term" value="P:melanin biosynthetic process"/>
    <property type="evidence" value="ECO:0000315"/>
    <property type="project" value="AspGD"/>
</dbReference>
<dbReference type="GO" id="GO:1900787">
    <property type="term" value="P:naphtho-gamma-pyrone biosynthetic process"/>
    <property type="evidence" value="ECO:0000315"/>
    <property type="project" value="AspGD"/>
</dbReference>
<dbReference type="GO" id="GO:0043324">
    <property type="term" value="P:pigment metabolic process involved in developmental pigmentation"/>
    <property type="evidence" value="ECO:0000315"/>
    <property type="project" value="AspGD"/>
</dbReference>
<dbReference type="GO" id="GO:0019748">
    <property type="term" value="P:secondary metabolic process"/>
    <property type="evidence" value="ECO:0000303"/>
    <property type="project" value="AspGD"/>
</dbReference>
<dbReference type="CDD" id="cd00833">
    <property type="entry name" value="PKS"/>
    <property type="match status" value="1"/>
</dbReference>
<dbReference type="FunFam" id="3.40.366.10:FF:000011">
    <property type="entry name" value="Polyketide synthetase PksP"/>
    <property type="match status" value="1"/>
</dbReference>
<dbReference type="FunFam" id="3.40.366.10:FF:000002">
    <property type="entry name" value="Probable polyketide synthase 2"/>
    <property type="match status" value="1"/>
</dbReference>
<dbReference type="FunFam" id="1.10.1200.10:FF:000011">
    <property type="entry name" value="Sterigmatocystin biosynthesis polyketide synthase"/>
    <property type="match status" value="2"/>
</dbReference>
<dbReference type="FunFam" id="3.10.129.110:FF:000001">
    <property type="entry name" value="Sterigmatocystin biosynthesis polyketide synthase"/>
    <property type="match status" value="1"/>
</dbReference>
<dbReference type="FunFam" id="3.40.47.10:FF:000031">
    <property type="entry name" value="Sterigmatocystin biosynthesis polyketide synthase"/>
    <property type="match status" value="1"/>
</dbReference>
<dbReference type="FunFam" id="3.40.50.1820:FF:000116">
    <property type="entry name" value="Sterigmatocystin biosynthesis polyketide synthase"/>
    <property type="match status" value="1"/>
</dbReference>
<dbReference type="Gene3D" id="3.30.70.3290">
    <property type="match status" value="1"/>
</dbReference>
<dbReference type="Gene3D" id="3.40.47.10">
    <property type="match status" value="1"/>
</dbReference>
<dbReference type="Gene3D" id="1.10.1200.10">
    <property type="entry name" value="ACP-like"/>
    <property type="match status" value="2"/>
</dbReference>
<dbReference type="Gene3D" id="3.40.50.1820">
    <property type="entry name" value="alpha/beta hydrolase"/>
    <property type="match status" value="1"/>
</dbReference>
<dbReference type="Gene3D" id="3.40.366.10">
    <property type="entry name" value="Malonyl-Coenzyme A Acyl Carrier Protein, domain 2"/>
    <property type="match status" value="2"/>
</dbReference>
<dbReference type="Gene3D" id="3.10.129.110">
    <property type="entry name" value="Polyketide synthase dehydratase"/>
    <property type="match status" value="1"/>
</dbReference>
<dbReference type="InterPro" id="IPR029058">
    <property type="entry name" value="AB_hydrolase_fold"/>
</dbReference>
<dbReference type="InterPro" id="IPR001227">
    <property type="entry name" value="Ac_transferase_dom_sf"/>
</dbReference>
<dbReference type="InterPro" id="IPR036736">
    <property type="entry name" value="ACP-like_sf"/>
</dbReference>
<dbReference type="InterPro" id="IPR014043">
    <property type="entry name" value="Acyl_transferase_dom"/>
</dbReference>
<dbReference type="InterPro" id="IPR016035">
    <property type="entry name" value="Acyl_Trfase/lysoPLipase"/>
</dbReference>
<dbReference type="InterPro" id="IPR018201">
    <property type="entry name" value="Ketoacyl_synth_AS"/>
</dbReference>
<dbReference type="InterPro" id="IPR014031">
    <property type="entry name" value="Ketoacyl_synth_C"/>
</dbReference>
<dbReference type="InterPro" id="IPR014030">
    <property type="entry name" value="Ketoacyl_synth_N"/>
</dbReference>
<dbReference type="InterPro" id="IPR016036">
    <property type="entry name" value="Malonyl_transacylase_ACP-bd"/>
</dbReference>
<dbReference type="InterPro" id="IPR020841">
    <property type="entry name" value="PKS_Beta-ketoAc_synthase_dom"/>
</dbReference>
<dbReference type="InterPro" id="IPR042104">
    <property type="entry name" value="PKS_dehydratase_sf"/>
</dbReference>
<dbReference type="InterPro" id="IPR049900">
    <property type="entry name" value="PKS_mFAS_DH"/>
</dbReference>
<dbReference type="InterPro" id="IPR050091">
    <property type="entry name" value="PKS_NRPS_Biosynth_Enz"/>
</dbReference>
<dbReference type="InterPro" id="IPR020806">
    <property type="entry name" value="PKS_PP-bd"/>
</dbReference>
<dbReference type="InterPro" id="IPR009081">
    <property type="entry name" value="PP-bd_ACP"/>
</dbReference>
<dbReference type="InterPro" id="IPR006162">
    <property type="entry name" value="Ppantetheine_attach_site"/>
</dbReference>
<dbReference type="InterPro" id="IPR030918">
    <property type="entry name" value="PT_fungal_PKS"/>
</dbReference>
<dbReference type="InterPro" id="IPR032088">
    <property type="entry name" value="SAT"/>
</dbReference>
<dbReference type="InterPro" id="IPR001031">
    <property type="entry name" value="Thioesterase"/>
</dbReference>
<dbReference type="InterPro" id="IPR016039">
    <property type="entry name" value="Thiolase-like"/>
</dbReference>
<dbReference type="NCBIfam" id="TIGR04532">
    <property type="entry name" value="PT_fungal_PKS"/>
    <property type="match status" value="1"/>
</dbReference>
<dbReference type="PANTHER" id="PTHR43775">
    <property type="entry name" value="FATTY ACID SYNTHASE"/>
    <property type="match status" value="1"/>
</dbReference>
<dbReference type="PANTHER" id="PTHR43775:SF37">
    <property type="entry name" value="SI:DKEY-61P9.11"/>
    <property type="match status" value="1"/>
</dbReference>
<dbReference type="Pfam" id="PF00698">
    <property type="entry name" value="Acyl_transf_1"/>
    <property type="match status" value="1"/>
</dbReference>
<dbReference type="Pfam" id="PF00109">
    <property type="entry name" value="ketoacyl-synt"/>
    <property type="match status" value="1"/>
</dbReference>
<dbReference type="Pfam" id="PF02801">
    <property type="entry name" value="Ketoacyl-synt_C"/>
    <property type="match status" value="1"/>
</dbReference>
<dbReference type="Pfam" id="PF00550">
    <property type="entry name" value="PP-binding"/>
    <property type="match status" value="2"/>
</dbReference>
<dbReference type="Pfam" id="PF16073">
    <property type="entry name" value="SAT"/>
    <property type="match status" value="1"/>
</dbReference>
<dbReference type="Pfam" id="PF00975">
    <property type="entry name" value="Thioesterase"/>
    <property type="match status" value="1"/>
</dbReference>
<dbReference type="SMART" id="SM00827">
    <property type="entry name" value="PKS_AT"/>
    <property type="match status" value="1"/>
</dbReference>
<dbReference type="SMART" id="SM00825">
    <property type="entry name" value="PKS_KS"/>
    <property type="match status" value="1"/>
</dbReference>
<dbReference type="SMART" id="SM00823">
    <property type="entry name" value="PKS_PP"/>
    <property type="match status" value="2"/>
</dbReference>
<dbReference type="SUPFAM" id="SSF47336">
    <property type="entry name" value="ACP-like"/>
    <property type="match status" value="2"/>
</dbReference>
<dbReference type="SUPFAM" id="SSF53474">
    <property type="entry name" value="alpha/beta-Hydrolases"/>
    <property type="match status" value="1"/>
</dbReference>
<dbReference type="SUPFAM" id="SSF52151">
    <property type="entry name" value="FabD/lysophospholipase-like"/>
    <property type="match status" value="1"/>
</dbReference>
<dbReference type="SUPFAM" id="SSF55048">
    <property type="entry name" value="Probable ACP-binding domain of malonyl-CoA ACP transacylase"/>
    <property type="match status" value="1"/>
</dbReference>
<dbReference type="SUPFAM" id="SSF53901">
    <property type="entry name" value="Thiolase-like"/>
    <property type="match status" value="1"/>
</dbReference>
<dbReference type="PROSITE" id="PS50075">
    <property type="entry name" value="CARRIER"/>
    <property type="match status" value="2"/>
</dbReference>
<dbReference type="PROSITE" id="PS00606">
    <property type="entry name" value="KS3_1"/>
    <property type="match status" value="1"/>
</dbReference>
<dbReference type="PROSITE" id="PS52004">
    <property type="entry name" value="KS3_2"/>
    <property type="match status" value="1"/>
</dbReference>
<dbReference type="PROSITE" id="PS00012">
    <property type="entry name" value="PHOSPHOPANTETHEINE"/>
    <property type="match status" value="1"/>
</dbReference>
<dbReference type="PROSITE" id="PS52019">
    <property type="entry name" value="PKS_MFAS_DH"/>
    <property type="match status" value="1"/>
</dbReference>
<protein>
    <recommendedName>
        <fullName evidence="10">Non-reducing polyketide synthase albA</fullName>
        <shortName evidence="10">NR-PKS albA</shortName>
        <ecNumber evidence="11">2.3.1.-</ecNumber>
    </recommendedName>
</protein>
<accession>A2QUI2</accession>
<gene>
    <name evidence="10" type="primary">albA</name>
    <name type="ORF">An09g05730</name>
</gene>
<sequence length="2153" mass="234150">MEGPSRVYLFGDQTSDIEAGLRRLLQAKNSTIVQSFFQQCFHAIRQEIAKLPPSHRKLFPRFTSIVDLLSRSRESGPSPVLESALTCIYQLGCFIHFYGDLGHDYPTPSNSHLVGLCTGVLSCTAVSCARNVGELIPAAVESVVIALRLGICVFRVRELVDSADSESTCWSALVSGISEAEASHLIDEYSSKKATPPSSKPYISAVSSNGVTVSAPPTVLDEFVETCISKNYKPVKAPIHGPYHAPHLYDDKDIDRILQQSSALEGLTGCSPVIPIISSNTGKPIKAKSIKDLFKVALEEILLRRLCWDKVTESCTSVCKTGTNHSCKLFPISSSATQSLFTVLKKAGVSISLETGVGEIATNPEMRNLTGKAENSKIAIIGMSGRFPDSDGTESFWNLLYKGLDVHRKVPADRWDVDAHVDMTGSKRNTSKVAYGCWINEPGLFDPRFFNMSPREALQADPAQRLALLTAYEALEMAGFIPDSSPSTQRDRVGIFYGMTSDDYREINSGQDIDTYFIPGGNRAFTPGRINYYFKFSGPSVSVDTACSSSLAAIHMACNSIWRNDCDAAITGGVNILTSPDNHAGLDRGHFLSTTGNCNTFDDGADGYCRADGVGSIVLKRLEDAEADNDPILAVINGAYTNHSAEAVSITRPHVGAQAFIFNKLLNDANIDPKDVSYVEMHGTGTQAGDAVEMQSVLDVFAPDYRRGPGQSLHIGSAKANIGHGESASGVTALVKVLLMMRENMIPPHCGIKTKINSNFPTDLAKRNVHIAFQPTPWNRPASGKRRTFVNNFSAAGGNTALLLEDAPIPERQGQDPRSFHLVSVSARSQSALKNNVEALVKYIDSQGKSFGVKETEFLPNLAYTTTARRIHHPFRVIAVGANLQSLRDSLHGALHRETYTPVPSTAPGIGFVFTGQGAQYSGMGKELYRSCFQFRTTIEHFDCIARSQGLPSILPLVDGSVAVEELSPVVVQVGTTCVQMALVNYWTALGVKPAFIIGHSLGDYAALNTAGVLSTSDTIYLCGRRAQLLTKECKIGTHSMLAIKASLAEVKHFLRDELHEVSCVNAPAETVVSGLVADIDELAQKCSTEGLKSTKLKVPYAFHSSQVDPILEAFEDIAQGVTFHKPTTPFVSALFGEVITDANWECLGPKYLRDHCRKTVNFLGGVEATRHAKLTNDKTLWVEIGSHTICSGMIKATLGPQVTTVASLRREEDTWKVLSNSLASLHLAGIDINWKQYHQDFSSSLQVLRLPAYKWDLKNYWIPYTNNFCLSKGAPVATVAAGPQHEYLTTAAQKVIETRSDGATATVVIENDIADPELNRVIQGHKVNGTALCPSSLYADISQTLAEYLIKKYKPEYDGLGLDVCEVTVPRPLIAKGGQQLFRVSATADWAEKKTTLQIYSVTAEGKKTADHATCTVRFFDCAAAEAEWKRVSYLVKRSIDRLHDIAENGDAHRLGRGMVYKLFAALVDYDDNFKSIREVILDSEQHEATARVKFQAPQGNFHRNPFWIDSFGHLSGFIMNASDATDSKNQVFVNHGWDSMRCLKKFSPDVTYRTYVRMQPWKDSIWAGDVYVFDGDDIVAVYGAVKFQALSRKILDTVLPPVGASKGPARPAASAQKAAPAAAASKSRASAPAPAKPAAKPSAPSLVKRALTILAEEVGLSESEITDDLVFADYGVDSLLSLTVTGRYREELDIDLESSIFIDQPTVKDFKQFLAPMSQGEASDGSTSDPESSSSFNGGSSTDESSAGSPVSSPPNEKVTQVEQHATIKEIRAILADEIGVTEEELKDDENLGEMGMDSLLSLTVLGRIRETLDLDLPGEFFIENQTLNDVEDALGLKPKAAPAPAPAPAPVPAPVSAPILKEPVPNANSTIMARASPHPRSTSILLQGNPKTATKTLFLFPDGSGSATSYATIPGVSPDVCVYGLNCPYMKTPEKLKYPLAEMTFPYLAEIRRRQPKGPYNFGGWSAGGICAYDAARYLILEEGEQVDRLLLLDSPFPIGLEKLPTRLYGFINSMGLFGEGNKAPPAWLLPHFLAFIDSLDTYKAVPLPFDDPKWAKKMPKTFMVWAKDGICSKPDDPWPEPDPDGKPDTREMVWLLKNRTDMGPNKWDTLVGPQNVGGITVIEGANHFTMTLGPKAKELGSFIGNAMAN</sequence>
<proteinExistence type="inferred from homology"/>
<name>ALBA_ASPNC</name>
<reference key="1">
    <citation type="journal article" date="2007" name="Nat. Biotechnol.">
        <title>Genome sequencing and analysis of the versatile cell factory Aspergillus niger CBS 513.88.</title>
        <authorList>
            <person name="Pel H.J."/>
            <person name="de Winde J.H."/>
            <person name="Archer D.B."/>
            <person name="Dyer P.S."/>
            <person name="Hofmann G."/>
            <person name="Schaap P.J."/>
            <person name="Turner G."/>
            <person name="de Vries R.P."/>
            <person name="Albang R."/>
            <person name="Albermann K."/>
            <person name="Andersen M.R."/>
            <person name="Bendtsen J.D."/>
            <person name="Benen J.A.E."/>
            <person name="van den Berg M."/>
            <person name="Breestraat S."/>
            <person name="Caddick M.X."/>
            <person name="Contreras R."/>
            <person name="Cornell M."/>
            <person name="Coutinho P.M."/>
            <person name="Danchin E.G.J."/>
            <person name="Debets A.J.M."/>
            <person name="Dekker P."/>
            <person name="van Dijck P.W.M."/>
            <person name="van Dijk A."/>
            <person name="Dijkhuizen L."/>
            <person name="Driessen A.J.M."/>
            <person name="d'Enfert C."/>
            <person name="Geysens S."/>
            <person name="Goosen C."/>
            <person name="Groot G.S.P."/>
            <person name="de Groot P.W.J."/>
            <person name="Guillemette T."/>
            <person name="Henrissat B."/>
            <person name="Herweijer M."/>
            <person name="van den Hombergh J.P.T.W."/>
            <person name="van den Hondel C.A.M.J.J."/>
            <person name="van der Heijden R.T.J.M."/>
            <person name="van der Kaaij R.M."/>
            <person name="Klis F.M."/>
            <person name="Kools H.J."/>
            <person name="Kubicek C.P."/>
            <person name="van Kuyk P.A."/>
            <person name="Lauber J."/>
            <person name="Lu X."/>
            <person name="van der Maarel M.J.E.C."/>
            <person name="Meulenberg R."/>
            <person name="Menke H."/>
            <person name="Mortimer M.A."/>
            <person name="Nielsen J."/>
            <person name="Oliver S.G."/>
            <person name="Olsthoorn M."/>
            <person name="Pal K."/>
            <person name="van Peij N.N.M.E."/>
            <person name="Ram A.F.J."/>
            <person name="Rinas U."/>
            <person name="Roubos J.A."/>
            <person name="Sagt C.M.J."/>
            <person name="Schmoll M."/>
            <person name="Sun J."/>
            <person name="Ussery D."/>
            <person name="Varga J."/>
            <person name="Vervecken W."/>
            <person name="van de Vondervoort P.J.J."/>
            <person name="Wedler H."/>
            <person name="Woesten H.A.B."/>
            <person name="Zeng A.-P."/>
            <person name="van Ooyen A.J.J."/>
            <person name="Visser J."/>
            <person name="Stam H."/>
        </authorList>
    </citation>
    <scope>NUCLEOTIDE SEQUENCE [LARGE SCALE GENOMIC DNA]</scope>
    <source>
        <strain>ATCC MYA-4892 / CBS 513.88 / FGSC A1513</strain>
    </source>
</reference>
<reference key="2">
    <citation type="journal article" date="2019" name="Biochemistry">
        <title>Biaryl-forming enzymes from Aspergilli exhibit substrate-dependent stereoselectivity.</title>
        <authorList>
            <person name="Obermaier S."/>
            <person name="Mueller M."/>
        </authorList>
    </citation>
    <scope>FUNCTION</scope>
    <scope>PATHWAY</scope>
</reference>
<organism>
    <name type="scientific">Aspergillus niger (strain ATCC MYA-4892 / CBS 513.88 / FGSC A1513)</name>
    <dbReference type="NCBI Taxonomy" id="425011"/>
    <lineage>
        <taxon>Eukaryota</taxon>
        <taxon>Fungi</taxon>
        <taxon>Dikarya</taxon>
        <taxon>Ascomycota</taxon>
        <taxon>Pezizomycotina</taxon>
        <taxon>Eurotiomycetes</taxon>
        <taxon>Eurotiomycetidae</taxon>
        <taxon>Eurotiales</taxon>
        <taxon>Aspergillaceae</taxon>
        <taxon>Aspergillus</taxon>
        <taxon>Aspergillus subgen. Circumdati</taxon>
    </lineage>
</organism>
<keyword id="KW-0511">Multifunctional enzyme</keyword>
<keyword id="KW-0596">Phosphopantetheine</keyword>
<keyword id="KW-0597">Phosphoprotein</keyword>
<keyword id="KW-1185">Reference proteome</keyword>
<keyword id="KW-0677">Repeat</keyword>
<keyword id="KW-0808">Transferase</keyword>
<feature type="chain" id="PRO_0000449884" description="Non-reducing polyketide synthase albA">
    <location>
        <begin position="1"/>
        <end position="2153"/>
    </location>
</feature>
<feature type="domain" description="Ketosynthase family 3 (KS3)" evidence="5">
    <location>
        <begin position="375"/>
        <end position="806"/>
    </location>
</feature>
<feature type="domain" description="PKS/mFAS DH" evidence="6">
    <location>
        <begin position="1286"/>
        <end position="1598"/>
    </location>
</feature>
<feature type="domain" description="Carrier 1" evidence="4">
    <location>
        <begin position="1643"/>
        <end position="1720"/>
    </location>
</feature>
<feature type="domain" description="Carrier 2" evidence="4">
    <location>
        <begin position="1764"/>
        <end position="1841"/>
    </location>
</feature>
<feature type="region of interest" description="N-terminal acylcarrier protein transacylase domain (SAT)" evidence="3">
    <location>
        <begin position="8"/>
        <end position="244"/>
    </location>
</feature>
<feature type="region of interest" description="Malonyl-CoA:ACP transacylase (MAT) domain" evidence="3">
    <location>
        <begin position="912"/>
        <end position="1232"/>
    </location>
</feature>
<feature type="region of interest" description="N-terminal hotdog fold" evidence="6">
    <location>
        <begin position="1286"/>
        <end position="1425"/>
    </location>
</feature>
<feature type="region of interest" description="Product template (PT) domain" evidence="3">
    <location>
        <begin position="1290"/>
        <end position="1603"/>
    </location>
</feature>
<feature type="region of interest" description="C-terminal hotdog fold" evidence="6">
    <location>
        <begin position="1452"/>
        <end position="1598"/>
    </location>
</feature>
<feature type="region of interest" description="Disordered" evidence="8">
    <location>
        <begin position="1608"/>
        <end position="1643"/>
    </location>
</feature>
<feature type="region of interest" description="Disordered" evidence="8">
    <location>
        <begin position="1720"/>
        <end position="1765"/>
    </location>
</feature>
<feature type="region of interest" description="Claisen cyclase domain" evidence="1">
    <location>
        <begin position="1879"/>
        <end position="2151"/>
    </location>
</feature>
<feature type="compositionally biased region" description="Low complexity" evidence="8">
    <location>
        <begin position="1610"/>
        <end position="1643"/>
    </location>
</feature>
<feature type="compositionally biased region" description="Low complexity" evidence="8">
    <location>
        <begin position="1725"/>
        <end position="1748"/>
    </location>
</feature>
<feature type="compositionally biased region" description="Polar residues" evidence="8">
    <location>
        <begin position="1749"/>
        <end position="1765"/>
    </location>
</feature>
<feature type="active site" description="For beta-ketoacyl synthase activity" evidence="5">
    <location>
        <position position="547"/>
    </location>
</feature>
<feature type="active site" description="For beta-ketoacyl synthase activity" evidence="5">
    <location>
        <position position="682"/>
    </location>
</feature>
<feature type="active site" description="For beta-ketoacyl synthase activity" evidence="5">
    <location>
        <position position="724"/>
    </location>
</feature>
<feature type="active site" description="For acyl/malonyl transferase activity" evidence="7">
    <location>
        <position position="1001"/>
    </location>
</feature>
<feature type="active site" description="Proton acceptor; for dehydratase activity" evidence="6">
    <location>
        <position position="1326"/>
    </location>
</feature>
<feature type="active site" description="Proton donor; for dehydratase activity" evidence="6">
    <location>
        <position position="1511"/>
    </location>
</feature>
<feature type="active site" description="For Claisen cyclase activity" evidence="1">
    <location>
        <position position="1969"/>
    </location>
</feature>
<feature type="modified residue" description="O-(pantetheine 4'-phosphoryl)serine" evidence="4">
    <location>
        <position position="1680"/>
    </location>
</feature>
<feature type="modified residue" description="O-(pantetheine 4'-phosphoryl)serine" evidence="4">
    <location>
        <position position="1801"/>
    </location>
</feature>
<evidence type="ECO:0000250" key="1">
    <source>
        <dbReference type="UniProtKB" id="Q03149"/>
    </source>
</evidence>
<evidence type="ECO:0000250" key="2">
    <source>
        <dbReference type="UniProtKB" id="Q5B0D0"/>
    </source>
</evidence>
<evidence type="ECO:0000255" key="3"/>
<evidence type="ECO:0000255" key="4">
    <source>
        <dbReference type="PROSITE-ProRule" id="PRU00258"/>
    </source>
</evidence>
<evidence type="ECO:0000255" key="5">
    <source>
        <dbReference type="PROSITE-ProRule" id="PRU01348"/>
    </source>
</evidence>
<evidence type="ECO:0000255" key="6">
    <source>
        <dbReference type="PROSITE-ProRule" id="PRU01363"/>
    </source>
</evidence>
<evidence type="ECO:0000255" key="7">
    <source>
        <dbReference type="PROSITE-ProRule" id="PRU10022"/>
    </source>
</evidence>
<evidence type="ECO:0000256" key="8">
    <source>
        <dbReference type="SAM" id="MobiDB-lite"/>
    </source>
</evidence>
<evidence type="ECO:0000269" key="9">
    <source>
    </source>
</evidence>
<evidence type="ECO:0000303" key="10">
    <source>
    </source>
</evidence>
<evidence type="ECO:0000305" key="11">
    <source>
    </source>
</evidence>